<evidence type="ECO:0000256" key="1">
    <source>
        <dbReference type="SAM" id="MobiDB-lite"/>
    </source>
</evidence>
<evidence type="ECO:0000269" key="2">
    <source>
    </source>
</evidence>
<evidence type="ECO:0000269" key="3">
    <source>
    </source>
</evidence>
<evidence type="ECO:0000305" key="4"/>
<evidence type="ECO:0007744" key="5">
    <source>
    </source>
</evidence>
<evidence type="ECO:0007744" key="6">
    <source>
    </source>
</evidence>
<protein>
    <recommendedName>
        <fullName>AP-2 complex subunit alpha</fullName>
    </recommendedName>
    <alternativeName>
        <fullName>Alpha-adaptin</fullName>
    </alternativeName>
    <alternativeName>
        <fullName>Clathrin assembly protein complex 2 alpha large chain</fullName>
    </alternativeName>
    <alternativeName>
        <fullName>Clathrin assembly protein large alpha chain</fullName>
    </alternativeName>
</protein>
<organism>
    <name type="scientific">Saccharomyces cerevisiae (strain ATCC 204508 / S288c)</name>
    <name type="common">Baker's yeast</name>
    <dbReference type="NCBI Taxonomy" id="559292"/>
    <lineage>
        <taxon>Eukaryota</taxon>
        <taxon>Fungi</taxon>
        <taxon>Dikarya</taxon>
        <taxon>Ascomycota</taxon>
        <taxon>Saccharomycotina</taxon>
        <taxon>Saccharomycetes</taxon>
        <taxon>Saccharomycetales</taxon>
        <taxon>Saccharomycetaceae</taxon>
        <taxon>Saccharomyces</taxon>
    </lineage>
</organism>
<feature type="chain" id="PRO_0000193737" description="AP-2 complex subunit alpha">
    <location>
        <begin position="1"/>
        <end position="1025"/>
    </location>
</feature>
<feature type="region of interest" description="Disordered" evidence="1">
    <location>
        <begin position="713"/>
        <end position="737"/>
    </location>
</feature>
<feature type="modified residue" description="Phosphothreonine" evidence="5 6">
    <location>
        <position position="727"/>
    </location>
</feature>
<feature type="modified residue" description="Phosphoserine" evidence="6">
    <location>
        <position position="733"/>
    </location>
</feature>
<proteinExistence type="evidence at protein level"/>
<sequence length="1025" mass="115012">MDRKKTLINSSVSNNNSTIKGLQLFIADLRSAQQAQEQEKRIQSEIVKIKQHFDAAKKKQGNHDRLGGYQRKKYVAKLAYIYITSNTTKLNEILFGLEQTVELLKSSIFSEKFIGYMTLELLYERSEVVAKVNDEVNYQLMKDLSSSDDNFVMLALNFVGVVGELTNRLAYNDDITTGVFKILRSPTSSIYLKKKSALSFLALLKSNHSILTEDLQRKQLWIQRILSLLDDTENYRLTLATIPLIEFIAKYIDPSYCTRLLPQLTEILYNCVVVGTSRSSDNQFPLEYTFANMPNPWLITKVVSLLSILIASPTERDSGSLLQTNNIDNELLNKLRKCVSVAIELGTRQAQDPMERIVQNTVLFSLINFASKLDPSDEAISNSVTALCSLLTSKEINIRYLTLDSLVKLCSSSGKPAIDAVRYKNLDMIFHLLNTERDSSIVRKVVDLLYTFTDVENVKIIVDGLLQYILSPKNLAEPQIKSDIAVKIAILTEKYATDINWFVIISLQLLSLTSNTTINDDEIWQRLCQIVVNNPSLHRITCERLVDYLCKKQASEAIIKAAAFLLGEYSSLITDRISSANLFTLFAEKYFSAPNVAKAMILTTMIKLYKTSPEIGSNVIKFFQLELNSLDIELQTRSFEYLNIIQLAKVNGNTDILQILFEPMPPFNSKSNPLLKRLGSLPASAGSTTLINTPSEASSSTPDLLSKRANSSRSIMVPMPPPSRRNTIDDVNSKISSSEDFSGKDSYYSRQILAPNWREGFTRMISHKQGVLFTSSLMKVFYRITTPDAQQPYVFHISLAFINLTEWEITGLSTQIIPSKTQGNPEYLIMNINTPSTATIGPHKRAEQSYEVSIRKPFDVEDSPILAIHFKCGGSTNTINLKTAIGMTTTLISSDVNPSMHLNLAQFISRWKTLSDALGKEGEYQKSGIKLNKDFRKVETISLEDGLLLLTQTVKRLGFDIVDQTSVRSTLFVSGIIHTKSEGNFGCLMKIQYQVNGTVNVTCKTTTAGPLAKYIVECIKNVLTK</sequence>
<accession>P38065</accession>
<accession>D6VPW2</accession>
<reference key="1">
    <citation type="journal article" date="1994" name="Yeast">
        <title>The sequence of a 22.4 kb DNA fragment from the left arm of yeast chromosome II reveals homologues to bacterial proline synthetase and murine alpha-adaptin, as well as a new permease and a DNA-binding protein.</title>
        <authorList>
            <person name="de Wergifosse P."/>
            <person name="Jacques B."/>
            <person name="Jonniaux J.-L."/>
            <person name="Purnelle B."/>
            <person name="Skala J."/>
            <person name="Goffeau A."/>
        </authorList>
    </citation>
    <scope>NUCLEOTIDE SEQUENCE [GENOMIC DNA]</scope>
    <source>
        <strain>ATCC 204508 / S288c</strain>
    </source>
</reference>
<reference key="2">
    <citation type="journal article" date="1994" name="EMBO J.">
        <title>Complete DNA sequence of yeast chromosome II.</title>
        <authorList>
            <person name="Feldmann H."/>
            <person name="Aigle M."/>
            <person name="Aljinovic G."/>
            <person name="Andre B."/>
            <person name="Baclet M.C."/>
            <person name="Barthe C."/>
            <person name="Baur A."/>
            <person name="Becam A.-M."/>
            <person name="Biteau N."/>
            <person name="Boles E."/>
            <person name="Brandt T."/>
            <person name="Brendel M."/>
            <person name="Brueckner M."/>
            <person name="Bussereau F."/>
            <person name="Christiansen C."/>
            <person name="Contreras R."/>
            <person name="Crouzet M."/>
            <person name="Cziepluch C."/>
            <person name="Demolis N."/>
            <person name="Delaveau T."/>
            <person name="Doignon F."/>
            <person name="Domdey H."/>
            <person name="Duesterhus S."/>
            <person name="Dubois E."/>
            <person name="Dujon B."/>
            <person name="El Bakkoury M."/>
            <person name="Entian K.-D."/>
            <person name="Feuermann M."/>
            <person name="Fiers W."/>
            <person name="Fobo G.M."/>
            <person name="Fritz C."/>
            <person name="Gassenhuber J."/>
            <person name="Glansdorff N."/>
            <person name="Goffeau A."/>
            <person name="Grivell L.A."/>
            <person name="de Haan M."/>
            <person name="Hein C."/>
            <person name="Herbert C.J."/>
            <person name="Hollenberg C.P."/>
            <person name="Holmstroem K."/>
            <person name="Jacq C."/>
            <person name="Jacquet M."/>
            <person name="Jauniaux J.-C."/>
            <person name="Jonniaux J.-L."/>
            <person name="Kallesoee T."/>
            <person name="Kiesau P."/>
            <person name="Kirchrath L."/>
            <person name="Koetter P."/>
            <person name="Korol S."/>
            <person name="Liebl S."/>
            <person name="Logghe M."/>
            <person name="Lohan A.J.E."/>
            <person name="Louis E.J."/>
            <person name="Li Z.Y."/>
            <person name="Maat M.J."/>
            <person name="Mallet L."/>
            <person name="Mannhaupt G."/>
            <person name="Messenguy F."/>
            <person name="Miosga T."/>
            <person name="Molemans F."/>
            <person name="Mueller S."/>
            <person name="Nasr F."/>
            <person name="Obermaier B."/>
            <person name="Perea J."/>
            <person name="Pierard A."/>
            <person name="Piravandi E."/>
            <person name="Pohl F.M."/>
            <person name="Pohl T.M."/>
            <person name="Potier S."/>
            <person name="Proft M."/>
            <person name="Purnelle B."/>
            <person name="Ramezani Rad M."/>
            <person name="Rieger M."/>
            <person name="Rose M."/>
            <person name="Schaaff-Gerstenschlaeger I."/>
            <person name="Scherens B."/>
            <person name="Schwarzlose C."/>
            <person name="Skala J."/>
            <person name="Slonimski P.P."/>
            <person name="Smits P.H.M."/>
            <person name="Souciet J.-L."/>
            <person name="Steensma H.Y."/>
            <person name="Stucka R."/>
            <person name="Urrestarazu L.A."/>
            <person name="van der Aart Q.J.M."/>
            <person name="Van Dyck L."/>
            <person name="Vassarotti A."/>
            <person name="Vetter I."/>
            <person name="Vierendeels F."/>
            <person name="Vissers S."/>
            <person name="Wagner G."/>
            <person name="de Wergifosse P."/>
            <person name="Wolfe K.H."/>
            <person name="Zagulski M."/>
            <person name="Zimmermann F.K."/>
            <person name="Mewes H.-W."/>
            <person name="Kleine K."/>
        </authorList>
    </citation>
    <scope>NUCLEOTIDE SEQUENCE [LARGE SCALE GENOMIC DNA]</scope>
    <source>
        <strain>ATCC 204508 / S288c</strain>
    </source>
</reference>
<reference key="3">
    <citation type="journal article" date="2014" name="G3 (Bethesda)">
        <title>The reference genome sequence of Saccharomyces cerevisiae: Then and now.</title>
        <authorList>
            <person name="Engel S.R."/>
            <person name="Dietrich F.S."/>
            <person name="Fisk D.G."/>
            <person name="Binkley G."/>
            <person name="Balakrishnan R."/>
            <person name="Costanzo M.C."/>
            <person name="Dwight S.S."/>
            <person name="Hitz B.C."/>
            <person name="Karra K."/>
            <person name="Nash R.S."/>
            <person name="Weng S."/>
            <person name="Wong E.D."/>
            <person name="Lloyd P."/>
            <person name="Skrzypek M.S."/>
            <person name="Miyasato S.R."/>
            <person name="Simison M."/>
            <person name="Cherry J.M."/>
        </authorList>
    </citation>
    <scope>GENOME REANNOTATION</scope>
    <source>
        <strain>ATCC 204508 / S288c</strain>
    </source>
</reference>
<reference key="4">
    <citation type="journal article" date="1999" name="Mol. Biol. Cell">
        <title>Adaptor complex-independent clathrin function in yeast.</title>
        <authorList>
            <person name="Yeung B.G."/>
            <person name="Phan H.L."/>
            <person name="Payne G.S."/>
        </authorList>
    </citation>
    <scope>FUNCTION</scope>
    <scope>SUBUNIT</scope>
</reference>
<reference key="5">
    <citation type="journal article" date="2003" name="Nature">
        <title>Global analysis of protein expression in yeast.</title>
        <authorList>
            <person name="Ghaemmaghami S."/>
            <person name="Huh W.-K."/>
            <person name="Bower K."/>
            <person name="Howson R.W."/>
            <person name="Belle A."/>
            <person name="Dephoure N."/>
            <person name="O'Shea E.K."/>
            <person name="Weissman J.S."/>
        </authorList>
    </citation>
    <scope>LEVEL OF PROTEIN EXPRESSION [LARGE SCALE ANALYSIS]</scope>
</reference>
<reference key="6">
    <citation type="journal article" date="2008" name="Mol. Cell. Proteomics">
        <title>A multidimensional chromatography technology for in-depth phosphoproteome analysis.</title>
        <authorList>
            <person name="Albuquerque C.P."/>
            <person name="Smolka M.B."/>
            <person name="Payne S.H."/>
            <person name="Bafna V."/>
            <person name="Eng J."/>
            <person name="Zhou H."/>
        </authorList>
    </citation>
    <scope>PHOSPHORYLATION [LARGE SCALE ANALYSIS] AT THR-727</scope>
    <scope>IDENTIFICATION BY MASS SPECTROMETRY [LARGE SCALE ANALYSIS]</scope>
</reference>
<reference key="7">
    <citation type="journal article" date="2009" name="Science">
        <title>Global analysis of Cdk1 substrate phosphorylation sites provides insights into evolution.</title>
        <authorList>
            <person name="Holt L.J."/>
            <person name="Tuch B.B."/>
            <person name="Villen J."/>
            <person name="Johnson A.D."/>
            <person name="Gygi S.P."/>
            <person name="Morgan D.O."/>
        </authorList>
    </citation>
    <scope>PHOSPHORYLATION [LARGE SCALE ANALYSIS] AT THR-727 AND SER-733</scope>
    <scope>IDENTIFICATION BY MASS SPECTROMETRY [LARGE SCALE ANALYSIS]</scope>
</reference>
<keyword id="KW-1003">Cell membrane</keyword>
<keyword id="KW-0168">Coated pit</keyword>
<keyword id="KW-0254">Endocytosis</keyword>
<keyword id="KW-0472">Membrane</keyword>
<keyword id="KW-0597">Phosphoprotein</keyword>
<keyword id="KW-0653">Protein transport</keyword>
<keyword id="KW-1185">Reference proteome</keyword>
<keyword id="KW-0813">Transport</keyword>
<comment type="function">
    <text evidence="2">Adaptins are components of the adaptor complexes which link clathrin to receptors in coated vesicles. Clathrin-associated protein complexes are believed to interact with the cytoplasmic tails of membrane proteins, leading to their selection and concentration. Alpha adaptin is a subunit of the plasma membrane adaptor. Facilitates interaction between APL1 and APS2.</text>
</comment>
<comment type="subunit">
    <text evidence="2">Adaptor protein complex 2 (AP-2) is a heterotetramer composed of two large adaptins (alpha-type subunit APL3 and beta-type subunit APL1), a medium chain (mu-type subunit APM4) and a small adaptin (sigma-type subunit APS2).</text>
</comment>
<comment type="interaction">
    <interactant intactId="EBI-2181">
        <id>P38065</id>
    </interactant>
    <interactant intactId="EBI-2608">
        <id>Q00381</id>
        <label>APS2</label>
    </interactant>
    <organismsDiffer>false</organismsDiffer>
    <experiments>4</experiments>
</comment>
<comment type="subcellular location">
    <subcellularLocation>
        <location>Cell membrane</location>
    </subcellularLocation>
    <subcellularLocation>
        <location>Membrane</location>
        <location>Coated pit</location>
        <topology>Peripheral membrane protein</topology>
        <orientation>Cytoplasmic side</orientation>
    </subcellularLocation>
    <text>Component of the coat surrounding the cytoplasmic face of coated vesicles in the plasma membrane.</text>
</comment>
<comment type="miscellaneous">
    <text evidence="3">Present with 1590 molecules/cell in log phase SD medium.</text>
</comment>
<comment type="similarity">
    <text evidence="4">Belongs to the adaptor complexes large subunit family.</text>
</comment>
<name>AP2A_YEAST</name>
<gene>
    <name type="primary">APL3</name>
    <name type="ordered locus">YBL037W</name>
    <name type="ORF">YBL0412</name>
</gene>
<dbReference type="EMBL" id="X78214">
    <property type="protein sequence ID" value="CAA55057.1"/>
    <property type="molecule type" value="Genomic_DNA"/>
</dbReference>
<dbReference type="EMBL" id="Z35798">
    <property type="protein sequence ID" value="CAA84857.1"/>
    <property type="molecule type" value="Genomic_DNA"/>
</dbReference>
<dbReference type="EMBL" id="BK006936">
    <property type="protein sequence ID" value="DAA07082.1"/>
    <property type="molecule type" value="Genomic_DNA"/>
</dbReference>
<dbReference type="PIR" id="S50293">
    <property type="entry name" value="S50293"/>
</dbReference>
<dbReference type="RefSeq" id="NP_009516.1">
    <property type="nucleotide sequence ID" value="NM_001178277.1"/>
</dbReference>
<dbReference type="SMR" id="P38065"/>
<dbReference type="BioGRID" id="32660">
    <property type="interactions" value="95"/>
</dbReference>
<dbReference type="ComplexPortal" id="CPX-534">
    <property type="entry name" value="Adapter complex AP-2"/>
</dbReference>
<dbReference type="DIP" id="DIP-2634N"/>
<dbReference type="FunCoup" id="P38065">
    <property type="interactions" value="1023"/>
</dbReference>
<dbReference type="IntAct" id="P38065">
    <property type="interactions" value="30"/>
</dbReference>
<dbReference type="MINT" id="P38065"/>
<dbReference type="STRING" id="4932.YBL037W"/>
<dbReference type="GlyGen" id="P38065">
    <property type="glycosylation" value="2 sites, 1 O-linked glycan (2 sites)"/>
</dbReference>
<dbReference type="iPTMnet" id="P38065"/>
<dbReference type="PaxDb" id="4932-YBL037W"/>
<dbReference type="PeptideAtlas" id="P38065"/>
<dbReference type="EnsemblFungi" id="YBL037W_mRNA">
    <property type="protein sequence ID" value="YBL037W"/>
    <property type="gene ID" value="YBL037W"/>
</dbReference>
<dbReference type="GeneID" id="852243"/>
<dbReference type="KEGG" id="sce:YBL037W"/>
<dbReference type="AGR" id="SGD:S000000133"/>
<dbReference type="SGD" id="S000000133">
    <property type="gene designation" value="APL3"/>
</dbReference>
<dbReference type="VEuPathDB" id="FungiDB:YBL037W"/>
<dbReference type="eggNOG" id="KOG1077">
    <property type="taxonomic scope" value="Eukaryota"/>
</dbReference>
<dbReference type="GeneTree" id="ENSGT00950000182838"/>
<dbReference type="HOGENOM" id="CLU_003824_1_0_1"/>
<dbReference type="InParanoid" id="P38065"/>
<dbReference type="OMA" id="PVLMHRY"/>
<dbReference type="OrthoDB" id="28053at2759"/>
<dbReference type="BioCyc" id="YEAST:G3O-28939-MONOMER"/>
<dbReference type="Reactome" id="R-SCE-437239">
    <property type="pathway name" value="Recycling pathway of L1"/>
</dbReference>
<dbReference type="Reactome" id="R-SCE-6798695">
    <property type="pathway name" value="Neutrophil degranulation"/>
</dbReference>
<dbReference type="Reactome" id="R-SCE-8856825">
    <property type="pathway name" value="Cargo recognition for clathrin-mediated endocytosis"/>
</dbReference>
<dbReference type="Reactome" id="R-SCE-8856828">
    <property type="pathway name" value="Clathrin-mediated endocytosis"/>
</dbReference>
<dbReference type="Reactome" id="R-SCE-8866427">
    <property type="pathway name" value="VLDLR internalisation and degradation"/>
</dbReference>
<dbReference type="Reactome" id="R-SCE-8964038">
    <property type="pathway name" value="LDL clearance"/>
</dbReference>
<dbReference type="BioGRID-ORCS" id="852243">
    <property type="hits" value="0 hits in 10 CRISPR screens"/>
</dbReference>
<dbReference type="PRO" id="PR:P38065"/>
<dbReference type="Proteomes" id="UP000002311">
    <property type="component" value="Chromosome II"/>
</dbReference>
<dbReference type="RNAct" id="P38065">
    <property type="molecule type" value="protein"/>
</dbReference>
<dbReference type="GO" id="GO:0030122">
    <property type="term" value="C:AP-2 adaptor complex"/>
    <property type="evidence" value="ECO:0000315"/>
    <property type="project" value="SGD"/>
</dbReference>
<dbReference type="GO" id="GO:0005935">
    <property type="term" value="C:cellular bud neck"/>
    <property type="evidence" value="ECO:0000314"/>
    <property type="project" value="SGD"/>
</dbReference>
<dbReference type="GO" id="GO:0035615">
    <property type="term" value="F:clathrin adaptor activity"/>
    <property type="evidence" value="ECO:0000318"/>
    <property type="project" value="GO_Central"/>
</dbReference>
<dbReference type="GO" id="GO:0072583">
    <property type="term" value="P:clathrin-dependent endocytosis"/>
    <property type="evidence" value="ECO:0000318"/>
    <property type="project" value="GO_Central"/>
</dbReference>
<dbReference type="GO" id="GO:0006886">
    <property type="term" value="P:intracellular protein transport"/>
    <property type="evidence" value="ECO:0000303"/>
    <property type="project" value="ComplexPortal"/>
</dbReference>
<dbReference type="FunFam" id="1.25.10.10:FF:000615">
    <property type="entry name" value="AP-2 complex subunit alpha"/>
    <property type="match status" value="1"/>
</dbReference>
<dbReference type="Gene3D" id="2.60.40.1230">
    <property type="match status" value="1"/>
</dbReference>
<dbReference type="Gene3D" id="1.25.10.10">
    <property type="entry name" value="Leucine-rich Repeat Variant"/>
    <property type="match status" value="1"/>
</dbReference>
<dbReference type="Gene3D" id="3.30.310.10">
    <property type="entry name" value="TATA-Binding Protein"/>
    <property type="match status" value="1"/>
</dbReference>
<dbReference type="InterPro" id="IPR050840">
    <property type="entry name" value="Adaptor_Complx_Large_Subunit"/>
</dbReference>
<dbReference type="InterPro" id="IPR017104">
    <property type="entry name" value="AP2_complex_asu"/>
</dbReference>
<dbReference type="InterPro" id="IPR011989">
    <property type="entry name" value="ARM-like"/>
</dbReference>
<dbReference type="InterPro" id="IPR016024">
    <property type="entry name" value="ARM-type_fold"/>
</dbReference>
<dbReference type="InterPro" id="IPR002553">
    <property type="entry name" value="Clathrin/coatomer_adapt-like_N"/>
</dbReference>
<dbReference type="InterPro" id="IPR008152">
    <property type="entry name" value="Clathrin_a/b/g-adaptin_app_Ig"/>
</dbReference>
<dbReference type="InterPro" id="IPR013041">
    <property type="entry name" value="Clathrin_app_Ig-like_sf"/>
</dbReference>
<dbReference type="InterPro" id="IPR009028">
    <property type="entry name" value="Coatomer/calthrin_app_sub_C"/>
</dbReference>
<dbReference type="InterPro" id="IPR012295">
    <property type="entry name" value="TBP_dom_sf"/>
</dbReference>
<dbReference type="PANTHER" id="PTHR22780">
    <property type="entry name" value="ADAPTIN, ALPHA/GAMMA/EPSILON"/>
    <property type="match status" value="1"/>
</dbReference>
<dbReference type="Pfam" id="PF01602">
    <property type="entry name" value="Adaptin_N"/>
    <property type="match status" value="1"/>
</dbReference>
<dbReference type="PIRSF" id="PIRSF037091">
    <property type="entry name" value="AP2_complex_alpha"/>
    <property type="match status" value="1"/>
</dbReference>
<dbReference type="SMART" id="SM00809">
    <property type="entry name" value="Alpha_adaptinC2"/>
    <property type="match status" value="1"/>
</dbReference>
<dbReference type="SUPFAM" id="SSF48371">
    <property type="entry name" value="ARM repeat"/>
    <property type="match status" value="1"/>
</dbReference>
<dbReference type="SUPFAM" id="SSF49348">
    <property type="entry name" value="Clathrin adaptor appendage domain"/>
    <property type="match status" value="1"/>
</dbReference>
<dbReference type="SUPFAM" id="SSF55711">
    <property type="entry name" value="Subdomain of clathrin and coatomer appendage domain"/>
    <property type="match status" value="1"/>
</dbReference>